<evidence type="ECO:0000255" key="1">
    <source>
        <dbReference type="HAMAP-Rule" id="MF_01558"/>
    </source>
</evidence>
<evidence type="ECO:0000255" key="2">
    <source>
        <dbReference type="PROSITE-ProRule" id="PRU01083"/>
    </source>
</evidence>
<sequence>MHPRFQTAFAQLADNLQSALAPILANHHFPAMLTAEQVSTLKNTAGLDEDALAFALLPLAAACARTDLSHFNVGAIARGVSGNWYFGANMEFLGATMQQTVHAEQSAISHAWLRGEKGLAAVTVNYTPCGHCRQFMNELNSGLDLRIHLPGRAPHTLRDYLPDAFGPKDLEIKTLLMDEQDHGFTLTGDTLTQAAITAANKSHMPYSHSPSGVALECKDGRIFTGSYAENAAFNPTLPPLQGALNLLSLNGYDYADIQRAILAEKGDAALIQWDATAATLKALGCHNIDRVLLG</sequence>
<feature type="chain" id="PRO_1000147112" description="Cytidine deaminase">
    <location>
        <begin position="1"/>
        <end position="294"/>
    </location>
</feature>
<feature type="domain" description="CMP/dCMP-type deaminase 1" evidence="2">
    <location>
        <begin position="48"/>
        <end position="168"/>
    </location>
</feature>
<feature type="domain" description="CMP/dCMP-type deaminase 2" evidence="2">
    <location>
        <begin position="186"/>
        <end position="294"/>
    </location>
</feature>
<feature type="active site" description="Proton donor" evidence="1">
    <location>
        <position position="104"/>
    </location>
</feature>
<feature type="binding site" evidence="1">
    <location>
        <begin position="89"/>
        <end position="91"/>
    </location>
    <ligand>
        <name>substrate</name>
    </ligand>
</feature>
<feature type="binding site" evidence="1">
    <location>
        <position position="102"/>
    </location>
    <ligand>
        <name>Zn(2+)</name>
        <dbReference type="ChEBI" id="CHEBI:29105"/>
        <note>catalytic</note>
    </ligand>
</feature>
<feature type="binding site" evidence="1">
    <location>
        <position position="129"/>
    </location>
    <ligand>
        <name>Zn(2+)</name>
        <dbReference type="ChEBI" id="CHEBI:29105"/>
        <note>catalytic</note>
    </ligand>
</feature>
<feature type="binding site" evidence="1">
    <location>
        <position position="132"/>
    </location>
    <ligand>
        <name>Zn(2+)</name>
        <dbReference type="ChEBI" id="CHEBI:29105"/>
        <note>catalytic</note>
    </ligand>
</feature>
<protein>
    <recommendedName>
        <fullName evidence="1">Cytidine deaminase</fullName>
        <ecNumber evidence="1">3.5.4.5</ecNumber>
    </recommendedName>
    <alternativeName>
        <fullName evidence="1">Cytidine aminohydrolase</fullName>
        <shortName evidence="1">CDA</shortName>
    </alternativeName>
</protein>
<reference key="1">
    <citation type="journal article" date="2011" name="J. Bacteriol.">
        <title>Comparative genomics of 28 Salmonella enterica isolates: evidence for CRISPR-mediated adaptive sublineage evolution.</title>
        <authorList>
            <person name="Fricke W.F."/>
            <person name="Mammel M.K."/>
            <person name="McDermott P.F."/>
            <person name="Tartera C."/>
            <person name="White D.G."/>
            <person name="Leclerc J.E."/>
            <person name="Ravel J."/>
            <person name="Cebula T.A."/>
        </authorList>
    </citation>
    <scope>NUCLEOTIDE SEQUENCE [LARGE SCALE GENOMIC DNA]</scope>
    <source>
        <strain>SL254</strain>
    </source>
</reference>
<comment type="function">
    <text evidence="1">This enzyme scavenges exogenous and endogenous cytidine and 2'-deoxycytidine for UMP synthesis.</text>
</comment>
<comment type="catalytic activity">
    <reaction evidence="1">
        <text>cytidine + H2O + H(+) = uridine + NH4(+)</text>
        <dbReference type="Rhea" id="RHEA:16069"/>
        <dbReference type="ChEBI" id="CHEBI:15377"/>
        <dbReference type="ChEBI" id="CHEBI:15378"/>
        <dbReference type="ChEBI" id="CHEBI:16704"/>
        <dbReference type="ChEBI" id="CHEBI:17562"/>
        <dbReference type="ChEBI" id="CHEBI:28938"/>
        <dbReference type="EC" id="3.5.4.5"/>
    </reaction>
</comment>
<comment type="catalytic activity">
    <reaction evidence="1">
        <text>2'-deoxycytidine + H2O + H(+) = 2'-deoxyuridine + NH4(+)</text>
        <dbReference type="Rhea" id="RHEA:13433"/>
        <dbReference type="ChEBI" id="CHEBI:15377"/>
        <dbReference type="ChEBI" id="CHEBI:15378"/>
        <dbReference type="ChEBI" id="CHEBI:15698"/>
        <dbReference type="ChEBI" id="CHEBI:16450"/>
        <dbReference type="ChEBI" id="CHEBI:28938"/>
        <dbReference type="EC" id="3.5.4.5"/>
    </reaction>
</comment>
<comment type="cofactor">
    <cofactor evidence="1">
        <name>Zn(2+)</name>
        <dbReference type="ChEBI" id="CHEBI:29105"/>
    </cofactor>
    <text evidence="1">Binds 1 zinc ion.</text>
</comment>
<comment type="subunit">
    <text evidence="1">Homodimer.</text>
</comment>
<comment type="similarity">
    <text evidence="1">Belongs to the cytidine and deoxycytidylate deaminase family.</text>
</comment>
<proteinExistence type="inferred from homology"/>
<accession>B4SY15</accession>
<name>CDD_SALNS</name>
<gene>
    <name evidence="1" type="primary">cdd</name>
    <name type="ordered locus">SNSL254_A2373</name>
</gene>
<organism>
    <name type="scientific">Salmonella newport (strain SL254)</name>
    <dbReference type="NCBI Taxonomy" id="423368"/>
    <lineage>
        <taxon>Bacteria</taxon>
        <taxon>Pseudomonadati</taxon>
        <taxon>Pseudomonadota</taxon>
        <taxon>Gammaproteobacteria</taxon>
        <taxon>Enterobacterales</taxon>
        <taxon>Enterobacteriaceae</taxon>
        <taxon>Salmonella</taxon>
    </lineage>
</organism>
<keyword id="KW-0378">Hydrolase</keyword>
<keyword id="KW-0479">Metal-binding</keyword>
<keyword id="KW-0862">Zinc</keyword>
<dbReference type="EC" id="3.5.4.5" evidence="1"/>
<dbReference type="EMBL" id="CP001113">
    <property type="protein sequence ID" value="ACF64107.1"/>
    <property type="molecule type" value="Genomic_DNA"/>
</dbReference>
<dbReference type="RefSeq" id="WP_000553538.1">
    <property type="nucleotide sequence ID" value="NZ_CCMR01000002.1"/>
</dbReference>
<dbReference type="SMR" id="B4SY15"/>
<dbReference type="KEGG" id="see:SNSL254_A2373"/>
<dbReference type="HOGENOM" id="CLU_052424_0_0_6"/>
<dbReference type="Proteomes" id="UP000008824">
    <property type="component" value="Chromosome"/>
</dbReference>
<dbReference type="GO" id="GO:0005829">
    <property type="term" value="C:cytosol"/>
    <property type="evidence" value="ECO:0007669"/>
    <property type="project" value="TreeGrafter"/>
</dbReference>
<dbReference type="GO" id="GO:0004126">
    <property type="term" value="F:cytidine deaminase activity"/>
    <property type="evidence" value="ECO:0007669"/>
    <property type="project" value="UniProtKB-UniRule"/>
</dbReference>
<dbReference type="GO" id="GO:0042802">
    <property type="term" value="F:identical protein binding"/>
    <property type="evidence" value="ECO:0007669"/>
    <property type="project" value="UniProtKB-ARBA"/>
</dbReference>
<dbReference type="GO" id="GO:0008270">
    <property type="term" value="F:zinc ion binding"/>
    <property type="evidence" value="ECO:0007669"/>
    <property type="project" value="UniProtKB-UniRule"/>
</dbReference>
<dbReference type="GO" id="GO:0009972">
    <property type="term" value="P:cytidine deamination"/>
    <property type="evidence" value="ECO:0007669"/>
    <property type="project" value="InterPro"/>
</dbReference>
<dbReference type="CDD" id="cd01283">
    <property type="entry name" value="cytidine_deaminase"/>
    <property type="match status" value="2"/>
</dbReference>
<dbReference type="FunFam" id="3.40.140.10:FF:000006">
    <property type="entry name" value="Cytidine deaminase"/>
    <property type="match status" value="1"/>
</dbReference>
<dbReference type="FunFam" id="3.40.140.10:FF:000007">
    <property type="entry name" value="Cytidine deaminase"/>
    <property type="match status" value="1"/>
</dbReference>
<dbReference type="Gene3D" id="3.40.140.10">
    <property type="entry name" value="Cytidine Deaminase, domain 2"/>
    <property type="match status" value="2"/>
</dbReference>
<dbReference type="HAMAP" id="MF_01558">
    <property type="entry name" value="Cyt_deam"/>
    <property type="match status" value="1"/>
</dbReference>
<dbReference type="InterPro" id="IPR016192">
    <property type="entry name" value="APOBEC/CMP_deaminase_Zn-bd"/>
</dbReference>
<dbReference type="InterPro" id="IPR002125">
    <property type="entry name" value="CMP_dCMP_dom"/>
</dbReference>
<dbReference type="InterPro" id="IPR013171">
    <property type="entry name" value="Cyd/dCyd_deaminase_Zn-bd"/>
</dbReference>
<dbReference type="InterPro" id="IPR050202">
    <property type="entry name" value="Cyt/Deoxycyt_deaminase"/>
</dbReference>
<dbReference type="InterPro" id="IPR006263">
    <property type="entry name" value="Cyt_deam_dimer"/>
</dbReference>
<dbReference type="InterPro" id="IPR016193">
    <property type="entry name" value="Cytidine_deaminase-like"/>
</dbReference>
<dbReference type="InterPro" id="IPR020797">
    <property type="entry name" value="Cytidine_deaminase_bacteria"/>
</dbReference>
<dbReference type="NCBIfam" id="TIGR01355">
    <property type="entry name" value="cyt_deam_dimer"/>
    <property type="match status" value="1"/>
</dbReference>
<dbReference type="NCBIfam" id="NF006537">
    <property type="entry name" value="PRK09027.1"/>
    <property type="match status" value="1"/>
</dbReference>
<dbReference type="PANTHER" id="PTHR11644">
    <property type="entry name" value="CYTIDINE DEAMINASE"/>
    <property type="match status" value="1"/>
</dbReference>
<dbReference type="PANTHER" id="PTHR11644:SF2">
    <property type="entry name" value="CYTIDINE DEAMINASE"/>
    <property type="match status" value="1"/>
</dbReference>
<dbReference type="Pfam" id="PF00383">
    <property type="entry name" value="dCMP_cyt_deam_1"/>
    <property type="match status" value="1"/>
</dbReference>
<dbReference type="Pfam" id="PF08211">
    <property type="entry name" value="dCMP_cyt_deam_2"/>
    <property type="match status" value="1"/>
</dbReference>
<dbReference type="PIRSF" id="PIRSF006334">
    <property type="entry name" value="Cdd_plus_pseudo"/>
    <property type="match status" value="1"/>
</dbReference>
<dbReference type="SUPFAM" id="SSF53927">
    <property type="entry name" value="Cytidine deaminase-like"/>
    <property type="match status" value="2"/>
</dbReference>
<dbReference type="PROSITE" id="PS00903">
    <property type="entry name" value="CYT_DCMP_DEAMINASES_1"/>
    <property type="match status" value="1"/>
</dbReference>
<dbReference type="PROSITE" id="PS51747">
    <property type="entry name" value="CYT_DCMP_DEAMINASES_2"/>
    <property type="match status" value="2"/>
</dbReference>